<protein>
    <recommendedName>
        <fullName>Major allergen Dau c 1</fullName>
    </recommendedName>
    <alternativeName>
        <fullName>CR16</fullName>
    </alternativeName>
    <alternativeName>
        <fullName>Pathogenesis-related protein Gea20</fullName>
    </alternativeName>
    <allergenName>Dau c 1</allergenName>
</protein>
<keyword id="KW-0002">3D-structure</keyword>
<keyword id="KW-0020">Allergen</keyword>
<keyword id="KW-0568">Pathogenesis-related protein</keyword>
<keyword id="KW-0611">Plant defense</keyword>
<organism>
    <name type="scientific">Daucus carota</name>
    <name type="common">Wild carrot</name>
    <dbReference type="NCBI Taxonomy" id="4039"/>
    <lineage>
        <taxon>Eukaryota</taxon>
        <taxon>Viridiplantae</taxon>
        <taxon>Streptophyta</taxon>
        <taxon>Embryophyta</taxon>
        <taxon>Tracheophyta</taxon>
        <taxon>Spermatophyta</taxon>
        <taxon>Magnoliopsida</taxon>
        <taxon>eudicotyledons</taxon>
        <taxon>Gunneridae</taxon>
        <taxon>Pentapetalae</taxon>
        <taxon>asterids</taxon>
        <taxon>campanulids</taxon>
        <taxon>Apiales</taxon>
        <taxon>Apiaceae</taxon>
        <taxon>Apioideae</taxon>
        <taxon>Scandiceae</taxon>
        <taxon>Daucinae</taxon>
        <taxon>Daucus</taxon>
        <taxon>Daucus sect. Daucus</taxon>
    </lineage>
</organism>
<evidence type="ECO:0000269" key="1">
    <source>
    </source>
</evidence>
<evidence type="ECO:0000305" key="2"/>
<evidence type="ECO:0007829" key="3">
    <source>
        <dbReference type="PDB" id="2WQL"/>
    </source>
</evidence>
<reference key="1">
    <citation type="journal article" date="1999" name="Clin. Exp. Allergy">
        <title>Molecular characterization of Dau c 1, the Bet v 1 homologous protein from carrot and its cross-reactivity with Bet v 1 and Api g 1.</title>
        <authorList>
            <person name="Hoffmann-Sommergruber K."/>
            <person name="O'Riordain G."/>
            <person name="Ahorn H."/>
            <person name="Ebner C."/>
            <person name="Da Camara Machado M.L."/>
            <person name="Puehringer H."/>
            <person name="Scheiner O."/>
            <person name="Breiteneder H."/>
        </authorList>
    </citation>
    <scope>NUCLEOTIDE SEQUENCE [MRNA]</scope>
    <source>
        <tissue>Root</tissue>
    </source>
</reference>
<reference key="2">
    <citation type="journal article" date="1997" name="Plant Cell Physiol.">
        <title>A major root protein of carrots with high homology to intracellular pathogenesis-related (PR) proteins and pollen allergens.</title>
        <authorList>
            <person name="Yamamoto M."/>
            <person name="Torikai S."/>
            <person name="Oeda K."/>
        </authorList>
    </citation>
    <scope>NUCLEOTIDE SEQUENCE [MRNA]</scope>
    <source>
        <tissue>Root</tissue>
    </source>
</reference>
<reference key="3">
    <citation type="journal article" date="1996" name="Plant Physiol.">
        <title>Isolation and characterization of a diverse set of genes from carrot somatic embryos.</title>
        <authorList>
            <person name="Lin X."/>
            <person name="Hwang G.J."/>
            <person name="Zimmerman J.L."/>
        </authorList>
    </citation>
    <scope>NUCLEOTIDE SEQUENCE [MRNA]</scope>
    <source>
        <strain>cv. Danvers Half-long</strain>
    </source>
</reference>
<reference key="4">
    <citation type="journal article" date="2009" name="Acta Crystallogr. D">
        <title>Structure of the major carrot allergen Dau c 1.</title>
        <authorList>
            <person name="Markovic-Housley Z."/>
            <person name="Basle A."/>
            <person name="Padavattan S."/>
            <person name="Maderegger B."/>
            <person name="Schirmer T."/>
            <person name="Hoffmann-Sommergruber K."/>
        </authorList>
    </citation>
    <scope>X-RAY CRYSTALLOGRAPHY (2.7 ANGSTROMS)</scope>
    <scope>SUBUNIT</scope>
</reference>
<comment type="subunit">
    <text evidence="1">Homodimer.</text>
</comment>
<comment type="allergen">
    <text>Causes an allergic reaction in human.</text>
</comment>
<comment type="similarity">
    <text evidence="2">Belongs to the BetVI family.</text>
</comment>
<comment type="sequence caution" evidence="2">
    <conflict type="erroneous initiation">
        <sequence resource="EMBL-CDS" id="AAB01092"/>
    </conflict>
</comment>
<dbReference type="EMBL" id="Z84376">
    <property type="protein sequence ID" value="CAB06416.1"/>
    <property type="molecule type" value="mRNA"/>
</dbReference>
<dbReference type="EMBL" id="Z81361">
    <property type="protein sequence ID" value="CAB03715.1"/>
    <property type="molecule type" value="mRNA"/>
</dbReference>
<dbReference type="EMBL" id="Z81362">
    <property type="protein sequence ID" value="CAB03716.1"/>
    <property type="molecule type" value="mRNA"/>
</dbReference>
<dbReference type="EMBL" id="D88388">
    <property type="protein sequence ID" value="BAA13604.1"/>
    <property type="molecule type" value="mRNA"/>
</dbReference>
<dbReference type="EMBL" id="U47087">
    <property type="protein sequence ID" value="AAB01092.1"/>
    <property type="status" value="ALT_INIT"/>
    <property type="molecule type" value="mRNA"/>
</dbReference>
<dbReference type="PIR" id="T14322">
    <property type="entry name" value="T14322"/>
</dbReference>
<dbReference type="PIR" id="T14325">
    <property type="entry name" value="T14325"/>
</dbReference>
<dbReference type="PIR" id="T14326">
    <property type="entry name" value="T14326"/>
</dbReference>
<dbReference type="PIR" id="T14356">
    <property type="entry name" value="T14356"/>
</dbReference>
<dbReference type="PDB" id="2WQL">
    <property type="method" value="X-ray"/>
    <property type="resolution" value="2.70 A"/>
    <property type="chains" value="A/B/C/D=1-154"/>
</dbReference>
<dbReference type="PDBsum" id="2WQL"/>
<dbReference type="SMR" id="O04298"/>
<dbReference type="Allergome" id="287">
    <property type="allergen name" value="Dau c 1"/>
</dbReference>
<dbReference type="Allergome" id="288">
    <property type="allergen name" value="Dau c 1.0101"/>
</dbReference>
<dbReference type="Allergome" id="289">
    <property type="allergen name" value="Dau c 1.0102"/>
</dbReference>
<dbReference type="Allergome" id="290">
    <property type="allergen name" value="Dau c 1.0103"/>
</dbReference>
<dbReference type="Allergome" id="291">
    <property type="allergen name" value="Dau c 1.0104"/>
</dbReference>
<dbReference type="Allergome" id="292">
    <property type="allergen name" value="Dau c 1.0105"/>
</dbReference>
<dbReference type="EvolutionaryTrace" id="O04298"/>
<dbReference type="GO" id="GO:0005737">
    <property type="term" value="C:cytoplasm"/>
    <property type="evidence" value="ECO:0007669"/>
    <property type="project" value="TreeGrafter"/>
</dbReference>
<dbReference type="GO" id="GO:0005634">
    <property type="term" value="C:nucleus"/>
    <property type="evidence" value="ECO:0007669"/>
    <property type="project" value="TreeGrafter"/>
</dbReference>
<dbReference type="GO" id="GO:0010427">
    <property type="term" value="F:abscisic acid binding"/>
    <property type="evidence" value="ECO:0007669"/>
    <property type="project" value="InterPro"/>
</dbReference>
<dbReference type="GO" id="GO:0004864">
    <property type="term" value="F:protein phosphatase inhibitor activity"/>
    <property type="evidence" value="ECO:0007669"/>
    <property type="project" value="InterPro"/>
</dbReference>
<dbReference type="GO" id="GO:0038023">
    <property type="term" value="F:signaling receptor activity"/>
    <property type="evidence" value="ECO:0007669"/>
    <property type="project" value="InterPro"/>
</dbReference>
<dbReference type="GO" id="GO:0009738">
    <property type="term" value="P:abscisic acid-activated signaling pathway"/>
    <property type="evidence" value="ECO:0007669"/>
    <property type="project" value="InterPro"/>
</dbReference>
<dbReference type="GO" id="GO:0006952">
    <property type="term" value="P:defense response"/>
    <property type="evidence" value="ECO:0007669"/>
    <property type="project" value="UniProtKB-KW"/>
</dbReference>
<dbReference type="CDD" id="cd07816">
    <property type="entry name" value="Bet_v1-like"/>
    <property type="match status" value="1"/>
</dbReference>
<dbReference type="FunFam" id="3.30.530.20:FF:000007">
    <property type="entry name" value="Major pollen allergen Bet v 1-A"/>
    <property type="match status" value="1"/>
</dbReference>
<dbReference type="Gene3D" id="3.30.530.20">
    <property type="match status" value="1"/>
</dbReference>
<dbReference type="InterPro" id="IPR000916">
    <property type="entry name" value="Bet_v_I/MLP"/>
</dbReference>
<dbReference type="InterPro" id="IPR024949">
    <property type="entry name" value="Bet_v_I_allergen"/>
</dbReference>
<dbReference type="InterPro" id="IPR050279">
    <property type="entry name" value="Plant_def-hormone_signal"/>
</dbReference>
<dbReference type="InterPro" id="IPR023393">
    <property type="entry name" value="START-like_dom_sf"/>
</dbReference>
<dbReference type="PANTHER" id="PTHR31213">
    <property type="entry name" value="OS08G0374000 PROTEIN-RELATED"/>
    <property type="match status" value="1"/>
</dbReference>
<dbReference type="PANTHER" id="PTHR31213:SF55">
    <property type="entry name" value="STRESS-INDUCED PROTEIN SAM22"/>
    <property type="match status" value="1"/>
</dbReference>
<dbReference type="Pfam" id="PF00407">
    <property type="entry name" value="Bet_v_1"/>
    <property type="match status" value="1"/>
</dbReference>
<dbReference type="PRINTS" id="PR00634">
    <property type="entry name" value="BETALLERGEN"/>
</dbReference>
<dbReference type="SMART" id="SM01037">
    <property type="entry name" value="Bet_v_1"/>
    <property type="match status" value="1"/>
</dbReference>
<dbReference type="SUPFAM" id="SSF55961">
    <property type="entry name" value="Bet v1-like"/>
    <property type="match status" value="1"/>
</dbReference>
<dbReference type="PROSITE" id="PS00451">
    <property type="entry name" value="PATHOGENESIS_BETVI"/>
    <property type="match status" value="1"/>
</dbReference>
<proteinExistence type="evidence at protein level"/>
<name>DAU1_DAUCA</name>
<feature type="chain" id="PRO_0000154188" description="Major allergen Dau c 1">
    <location>
        <begin position="1"/>
        <end position="154"/>
    </location>
</feature>
<feature type="sequence variant" description="In Dau C 1.2.">
    <original>P</original>
    <variation>T</variation>
    <location>
        <position position="36"/>
    </location>
</feature>
<feature type="sequence variant" description="In Dau C 1.3 and CR16/Gea20.">
    <original>E</original>
    <variation>D</variation>
    <location>
        <position position="43"/>
    </location>
</feature>
<feature type="sequence variant" description="In Dau C 1.2.">
    <original>S</original>
    <variation>T</variation>
    <location>
        <position position="66"/>
    </location>
</feature>
<feature type="sequence variant" description="In Dau C 1.2.">
    <original>T</original>
    <variation>S</variation>
    <location>
        <position position="80"/>
    </location>
</feature>
<feature type="sequence variant" description="In CR16/Gea20.">
    <original>G</original>
    <variation>E</variation>
    <location>
        <position position="93"/>
    </location>
</feature>
<feature type="sequence variant" description="In Dau C 1.2 and CR16/Gea20.">
    <original>L</original>
    <variation>M</variation>
    <location>
        <position position="102"/>
    </location>
</feature>
<feature type="sequence variant" description="In Dau C 1.3.">
    <original>A</original>
    <variation>E</variation>
    <location>
        <position position="138"/>
    </location>
</feature>
<feature type="strand" evidence="3">
    <location>
        <begin position="5"/>
        <end position="14"/>
    </location>
</feature>
<feature type="helix" evidence="3">
    <location>
        <begin position="16"/>
        <end position="23"/>
    </location>
</feature>
<feature type="turn" evidence="3">
    <location>
        <begin position="24"/>
        <end position="26"/>
    </location>
</feature>
<feature type="helix" evidence="3">
    <location>
        <begin position="27"/>
        <end position="34"/>
    </location>
</feature>
<feature type="turn" evidence="3">
    <location>
        <begin position="36"/>
        <end position="38"/>
    </location>
</feature>
<feature type="strand" evidence="3">
    <location>
        <begin position="40"/>
        <end position="49"/>
    </location>
</feature>
<feature type="strand" evidence="3">
    <location>
        <begin position="53"/>
        <end position="57"/>
    </location>
</feature>
<feature type="strand" evidence="3">
    <location>
        <begin position="66"/>
        <end position="75"/>
    </location>
</feature>
<feature type="turn" evidence="3">
    <location>
        <begin position="76"/>
        <end position="79"/>
    </location>
</feature>
<feature type="strand" evidence="3">
    <location>
        <begin position="80"/>
        <end position="88"/>
    </location>
</feature>
<feature type="helix" evidence="3">
    <location>
        <begin position="89"/>
        <end position="91"/>
    </location>
</feature>
<feature type="turn" evidence="3">
    <location>
        <begin position="92"/>
        <end position="94"/>
    </location>
</feature>
<feature type="strand" evidence="3">
    <location>
        <begin position="95"/>
        <end position="106"/>
    </location>
</feature>
<feature type="strand" evidence="3">
    <location>
        <begin position="112"/>
        <end position="123"/>
    </location>
</feature>
<feature type="helix" evidence="3">
    <location>
        <begin position="130"/>
        <end position="153"/>
    </location>
</feature>
<accession>O04298</accession>
<accession>O04296</accession>
<accession>O04297</accession>
<accession>Q39678</accession>
<accession>Q96407</accession>
<sequence>MGAQSHSLEITSSVSAEKIFSGIVLDVDTVIPKAAPGAYKSVEVKGDGGAGTVRIITLPEGSPITSMTVRTDAVNKEALTYDSTVIDGDILLGFIESIETHLVVVPTADGGSITKTTAIFHTKGDAVVPEENIKFADAQNTALFKAIEAYLIAN</sequence>